<gene>
    <name evidence="1" type="primary">cheB1</name>
    <name type="ordered locus">Mhun_0109</name>
</gene>
<proteinExistence type="inferred from homology"/>
<feature type="chain" id="PRO_0000264338" description="Protein-glutamate methylesterase/protein-glutamine glutaminase 1">
    <location>
        <begin position="1"/>
        <end position="342"/>
    </location>
</feature>
<feature type="domain" description="Response regulatory" evidence="1">
    <location>
        <begin position="3"/>
        <end position="121"/>
    </location>
</feature>
<feature type="domain" description="CheB-type methylesterase" evidence="1">
    <location>
        <begin position="141"/>
        <end position="340"/>
    </location>
</feature>
<feature type="active site" evidence="1">
    <location>
        <position position="153"/>
    </location>
</feature>
<feature type="active site" evidence="1">
    <location>
        <position position="180"/>
    </location>
</feature>
<feature type="active site" evidence="1">
    <location>
        <position position="282"/>
    </location>
</feature>
<feature type="modified residue" description="4-aspartylphosphate" evidence="1">
    <location>
        <position position="54"/>
    </location>
</feature>
<evidence type="ECO:0000255" key="1">
    <source>
        <dbReference type="HAMAP-Rule" id="MF_00099"/>
    </source>
</evidence>
<keyword id="KW-0145">Chemotaxis</keyword>
<keyword id="KW-0963">Cytoplasm</keyword>
<keyword id="KW-0378">Hydrolase</keyword>
<keyword id="KW-0597">Phosphoprotein</keyword>
<keyword id="KW-1185">Reference proteome</keyword>
<comment type="function">
    <text evidence="1">Involved in chemotaxis. Part of a chemotaxis signal transduction system that modulates chemotaxis in response to various stimuli. Catalyzes the demethylation of specific methylglutamate residues introduced into the chemoreceptors (methyl-accepting chemotaxis proteins or MCP) by CheR. Also mediates the irreversible deamidation of specific glutamine residues to glutamic acid.</text>
</comment>
<comment type="catalytic activity">
    <reaction evidence="1">
        <text>[protein]-L-glutamate 5-O-methyl ester + H2O = L-glutamyl-[protein] + methanol + H(+)</text>
        <dbReference type="Rhea" id="RHEA:23236"/>
        <dbReference type="Rhea" id="RHEA-COMP:10208"/>
        <dbReference type="Rhea" id="RHEA-COMP:10311"/>
        <dbReference type="ChEBI" id="CHEBI:15377"/>
        <dbReference type="ChEBI" id="CHEBI:15378"/>
        <dbReference type="ChEBI" id="CHEBI:17790"/>
        <dbReference type="ChEBI" id="CHEBI:29973"/>
        <dbReference type="ChEBI" id="CHEBI:82795"/>
        <dbReference type="EC" id="3.1.1.61"/>
    </reaction>
</comment>
<comment type="catalytic activity">
    <reaction evidence="1">
        <text>L-glutaminyl-[protein] + H2O = L-glutamyl-[protein] + NH4(+)</text>
        <dbReference type="Rhea" id="RHEA:16441"/>
        <dbReference type="Rhea" id="RHEA-COMP:10207"/>
        <dbReference type="Rhea" id="RHEA-COMP:10208"/>
        <dbReference type="ChEBI" id="CHEBI:15377"/>
        <dbReference type="ChEBI" id="CHEBI:28938"/>
        <dbReference type="ChEBI" id="CHEBI:29973"/>
        <dbReference type="ChEBI" id="CHEBI:30011"/>
        <dbReference type="EC" id="3.5.1.44"/>
    </reaction>
</comment>
<comment type="subcellular location">
    <subcellularLocation>
        <location evidence="1">Cytoplasm</location>
    </subcellularLocation>
</comment>
<comment type="domain">
    <text evidence="1">Contains a C-terminal catalytic domain, and an N-terminal region which modulates catalytic activity.</text>
</comment>
<comment type="PTM">
    <text evidence="1">Phosphorylated by CheA. Phosphorylation of the N-terminal regulatory domain activates the methylesterase activity.</text>
</comment>
<comment type="similarity">
    <text evidence="1">Belongs to the CheB family.</text>
</comment>
<protein>
    <recommendedName>
        <fullName evidence="1">Protein-glutamate methylesterase/protein-glutamine glutaminase 1</fullName>
        <ecNumber evidence="1">3.1.1.61</ecNumber>
        <ecNumber evidence="1">3.5.1.44</ecNumber>
    </recommendedName>
</protein>
<organism>
    <name type="scientific">Methanospirillum hungatei JF-1 (strain ATCC 27890 / DSM 864 / NBRC 100397 / JF-1)</name>
    <dbReference type="NCBI Taxonomy" id="323259"/>
    <lineage>
        <taxon>Archaea</taxon>
        <taxon>Methanobacteriati</taxon>
        <taxon>Methanobacteriota</taxon>
        <taxon>Stenosarchaea group</taxon>
        <taxon>Methanomicrobia</taxon>
        <taxon>Methanomicrobiales</taxon>
        <taxon>Methanospirillaceae</taxon>
        <taxon>Methanospirillum</taxon>
    </lineage>
</organism>
<sequence length="342" mass="36666">MIRVLVIDDSLFIRTVVQDMLSDDPDIQIVGVASDGLEALDKIRELKPDLITLDIEMPRLDGLSMLERKKEIDRFPKTLVLSSLTSEGAEMTKRAIALGADDFMLKPRGIKNIREIGGELKHKIKNICTIAYITAKPVLKDSNARNVVLIGSSAGGPPMLDTIVSKLPSDLNAAVIITQHMPKGGFTAALAARLNRISPLQIRETENGDVLKNGTVLVSRAGFHTIISSVLDKGGSQSGKIILTDSPPVHNVKPAVDKTFISAAQVFGNHCVTAILSGMGNDGGEGTEAIKKAGGVTIVCREEDCLVYGMARSALSRNCVDHVLSLQAIPEKIVETIRAMNG</sequence>
<accession>Q2FMT2</accession>
<dbReference type="EC" id="3.1.1.61" evidence="1"/>
<dbReference type="EC" id="3.5.1.44" evidence="1"/>
<dbReference type="EMBL" id="CP000254">
    <property type="protein sequence ID" value="ABD39887.1"/>
    <property type="molecule type" value="Genomic_DNA"/>
</dbReference>
<dbReference type="RefSeq" id="WP_011447183.1">
    <property type="nucleotide sequence ID" value="NC_007796.1"/>
</dbReference>
<dbReference type="SMR" id="Q2FMT2"/>
<dbReference type="STRING" id="323259.Mhun_0109"/>
<dbReference type="EnsemblBacteria" id="ABD39887">
    <property type="protein sequence ID" value="ABD39887"/>
    <property type="gene ID" value="Mhun_0109"/>
</dbReference>
<dbReference type="GeneID" id="3923804"/>
<dbReference type="KEGG" id="mhu:Mhun_0109"/>
<dbReference type="eggNOG" id="arCOG02382">
    <property type="taxonomic scope" value="Archaea"/>
</dbReference>
<dbReference type="HOGENOM" id="CLU_000445_51_0_2"/>
<dbReference type="InParanoid" id="Q2FMT2"/>
<dbReference type="OrthoDB" id="2857at2157"/>
<dbReference type="Proteomes" id="UP000001941">
    <property type="component" value="Chromosome"/>
</dbReference>
<dbReference type="GO" id="GO:0005737">
    <property type="term" value="C:cytoplasm"/>
    <property type="evidence" value="ECO:0007669"/>
    <property type="project" value="UniProtKB-SubCell"/>
</dbReference>
<dbReference type="GO" id="GO:0000156">
    <property type="term" value="F:phosphorelay response regulator activity"/>
    <property type="evidence" value="ECO:0007669"/>
    <property type="project" value="InterPro"/>
</dbReference>
<dbReference type="GO" id="GO:0008984">
    <property type="term" value="F:protein-glutamate methylesterase activity"/>
    <property type="evidence" value="ECO:0007669"/>
    <property type="project" value="UniProtKB-UniRule"/>
</dbReference>
<dbReference type="GO" id="GO:0050568">
    <property type="term" value="F:protein-glutamine glutaminase activity"/>
    <property type="evidence" value="ECO:0007669"/>
    <property type="project" value="UniProtKB-UniRule"/>
</dbReference>
<dbReference type="GO" id="GO:0006935">
    <property type="term" value="P:chemotaxis"/>
    <property type="evidence" value="ECO:0007669"/>
    <property type="project" value="UniProtKB-UniRule"/>
</dbReference>
<dbReference type="CDD" id="cd16432">
    <property type="entry name" value="CheB_Rec"/>
    <property type="match status" value="1"/>
</dbReference>
<dbReference type="CDD" id="cd17541">
    <property type="entry name" value="REC_CheB-like"/>
    <property type="match status" value="1"/>
</dbReference>
<dbReference type="Gene3D" id="3.40.50.2300">
    <property type="match status" value="1"/>
</dbReference>
<dbReference type="Gene3D" id="3.40.50.180">
    <property type="entry name" value="Methylesterase CheB, C-terminal domain"/>
    <property type="match status" value="1"/>
</dbReference>
<dbReference type="HAMAP" id="MF_00099">
    <property type="entry name" value="CheB_chemtxs"/>
    <property type="match status" value="1"/>
</dbReference>
<dbReference type="InterPro" id="IPR008248">
    <property type="entry name" value="CheB-like"/>
</dbReference>
<dbReference type="InterPro" id="IPR035909">
    <property type="entry name" value="CheB_C"/>
</dbReference>
<dbReference type="InterPro" id="IPR011006">
    <property type="entry name" value="CheY-like_superfamily"/>
</dbReference>
<dbReference type="InterPro" id="IPR000673">
    <property type="entry name" value="Sig_transdc_resp-reg_Me-estase"/>
</dbReference>
<dbReference type="InterPro" id="IPR001789">
    <property type="entry name" value="Sig_transdc_resp-reg_receiver"/>
</dbReference>
<dbReference type="NCBIfam" id="NF001965">
    <property type="entry name" value="PRK00742.1"/>
    <property type="match status" value="1"/>
</dbReference>
<dbReference type="PANTHER" id="PTHR42872">
    <property type="entry name" value="PROTEIN-GLUTAMATE METHYLESTERASE/PROTEIN-GLUTAMINE GLUTAMINASE"/>
    <property type="match status" value="1"/>
</dbReference>
<dbReference type="PANTHER" id="PTHR42872:SF6">
    <property type="entry name" value="PROTEIN-GLUTAMATE METHYLESTERASE_PROTEIN-GLUTAMINE GLUTAMINASE"/>
    <property type="match status" value="1"/>
</dbReference>
<dbReference type="Pfam" id="PF01339">
    <property type="entry name" value="CheB_methylest"/>
    <property type="match status" value="1"/>
</dbReference>
<dbReference type="Pfam" id="PF00072">
    <property type="entry name" value="Response_reg"/>
    <property type="match status" value="1"/>
</dbReference>
<dbReference type="PIRSF" id="PIRSF000876">
    <property type="entry name" value="RR_chemtxs_CheB"/>
    <property type="match status" value="1"/>
</dbReference>
<dbReference type="SMART" id="SM00448">
    <property type="entry name" value="REC"/>
    <property type="match status" value="1"/>
</dbReference>
<dbReference type="SUPFAM" id="SSF52172">
    <property type="entry name" value="CheY-like"/>
    <property type="match status" value="1"/>
</dbReference>
<dbReference type="SUPFAM" id="SSF52738">
    <property type="entry name" value="Methylesterase CheB, C-terminal domain"/>
    <property type="match status" value="1"/>
</dbReference>
<dbReference type="PROSITE" id="PS50122">
    <property type="entry name" value="CHEB"/>
    <property type="match status" value="1"/>
</dbReference>
<dbReference type="PROSITE" id="PS50110">
    <property type="entry name" value="RESPONSE_REGULATORY"/>
    <property type="match status" value="1"/>
</dbReference>
<reference key="1">
    <citation type="journal article" date="2016" name="Stand. Genomic Sci.">
        <title>Complete genome sequence of Methanospirillum hungatei type strain JF1.</title>
        <authorList>
            <person name="Gunsalus R.P."/>
            <person name="Cook L.E."/>
            <person name="Crable B."/>
            <person name="Rohlin L."/>
            <person name="McDonald E."/>
            <person name="Mouttaki H."/>
            <person name="Sieber J.R."/>
            <person name="Poweleit N."/>
            <person name="Zhou H."/>
            <person name="Lapidus A.L."/>
            <person name="Daligault H.E."/>
            <person name="Land M."/>
            <person name="Gilna P."/>
            <person name="Ivanova N."/>
            <person name="Kyrpides N."/>
            <person name="Culley D.E."/>
            <person name="McInerney M.J."/>
        </authorList>
    </citation>
    <scope>NUCLEOTIDE SEQUENCE [LARGE SCALE GENOMIC DNA]</scope>
    <source>
        <strain>ATCC 27890 / DSM 864 / NBRC 100397 / JF-1</strain>
    </source>
</reference>
<name>CHEB1_METHJ</name>